<feature type="chain" id="PRO_1000074354" description="SsrA-binding protein">
    <location>
        <begin position="1"/>
        <end position="160"/>
    </location>
</feature>
<sequence>MTKKKAKVASNTIALNKRARHDYFIEDEIEAGLSLQGWEVKSMRAGKASIGDSYIIFKHGEAYLFGATIQPLSVASTHIVCDPTRTRKLLLNQKELASLFGKANRDGFTIVALSLYWKGPWAKVKIGLAKGKKLHDKREDIKDREWKVTKDRIMKNAQRG</sequence>
<dbReference type="EMBL" id="CP000947">
    <property type="protein sequence ID" value="ACA32443.1"/>
    <property type="molecule type" value="Genomic_DNA"/>
</dbReference>
<dbReference type="RefSeq" id="WP_011608630.1">
    <property type="nucleotide sequence ID" value="NC_010519.1"/>
</dbReference>
<dbReference type="SMR" id="B0USL1"/>
<dbReference type="STRING" id="228400.HSM_0772"/>
<dbReference type="GeneID" id="31487061"/>
<dbReference type="KEGG" id="hsm:HSM_0772"/>
<dbReference type="HOGENOM" id="CLU_108953_3_0_6"/>
<dbReference type="GO" id="GO:0005829">
    <property type="term" value="C:cytosol"/>
    <property type="evidence" value="ECO:0007669"/>
    <property type="project" value="TreeGrafter"/>
</dbReference>
<dbReference type="GO" id="GO:0003723">
    <property type="term" value="F:RNA binding"/>
    <property type="evidence" value="ECO:0007669"/>
    <property type="project" value="UniProtKB-UniRule"/>
</dbReference>
<dbReference type="GO" id="GO:0070929">
    <property type="term" value="P:trans-translation"/>
    <property type="evidence" value="ECO:0007669"/>
    <property type="project" value="UniProtKB-UniRule"/>
</dbReference>
<dbReference type="CDD" id="cd09294">
    <property type="entry name" value="SmpB"/>
    <property type="match status" value="1"/>
</dbReference>
<dbReference type="Gene3D" id="2.40.280.10">
    <property type="match status" value="1"/>
</dbReference>
<dbReference type="HAMAP" id="MF_00023">
    <property type="entry name" value="SmpB"/>
    <property type="match status" value="1"/>
</dbReference>
<dbReference type="InterPro" id="IPR023620">
    <property type="entry name" value="SmpB"/>
</dbReference>
<dbReference type="InterPro" id="IPR000037">
    <property type="entry name" value="SsrA-bd_prot"/>
</dbReference>
<dbReference type="InterPro" id="IPR020081">
    <property type="entry name" value="SsrA-bd_prot_CS"/>
</dbReference>
<dbReference type="NCBIfam" id="NF003843">
    <property type="entry name" value="PRK05422.1"/>
    <property type="match status" value="1"/>
</dbReference>
<dbReference type="NCBIfam" id="TIGR00086">
    <property type="entry name" value="smpB"/>
    <property type="match status" value="1"/>
</dbReference>
<dbReference type="PANTHER" id="PTHR30308:SF2">
    <property type="entry name" value="SSRA-BINDING PROTEIN"/>
    <property type="match status" value="1"/>
</dbReference>
<dbReference type="PANTHER" id="PTHR30308">
    <property type="entry name" value="TMRNA-BINDING COMPONENT OF TRANS-TRANSLATION TAGGING COMPLEX"/>
    <property type="match status" value="1"/>
</dbReference>
<dbReference type="Pfam" id="PF01668">
    <property type="entry name" value="SmpB"/>
    <property type="match status" value="1"/>
</dbReference>
<dbReference type="SUPFAM" id="SSF74982">
    <property type="entry name" value="Small protein B (SmpB)"/>
    <property type="match status" value="1"/>
</dbReference>
<dbReference type="PROSITE" id="PS01317">
    <property type="entry name" value="SSRP"/>
    <property type="match status" value="1"/>
</dbReference>
<gene>
    <name evidence="1" type="primary">smpB</name>
    <name type="ordered locus">HSM_0772</name>
</gene>
<accession>B0USL1</accession>
<evidence type="ECO:0000255" key="1">
    <source>
        <dbReference type="HAMAP-Rule" id="MF_00023"/>
    </source>
</evidence>
<organism>
    <name type="scientific">Histophilus somni (strain 2336)</name>
    <name type="common">Haemophilus somnus</name>
    <dbReference type="NCBI Taxonomy" id="228400"/>
    <lineage>
        <taxon>Bacteria</taxon>
        <taxon>Pseudomonadati</taxon>
        <taxon>Pseudomonadota</taxon>
        <taxon>Gammaproteobacteria</taxon>
        <taxon>Pasteurellales</taxon>
        <taxon>Pasteurellaceae</taxon>
        <taxon>Histophilus</taxon>
    </lineage>
</organism>
<comment type="function">
    <text evidence="1">Required for rescue of stalled ribosomes mediated by trans-translation. Binds to transfer-messenger RNA (tmRNA), required for stable association of tmRNA with ribosomes. tmRNA and SmpB together mimic tRNA shape, replacing the anticodon stem-loop with SmpB. tmRNA is encoded by the ssrA gene; the 2 termini fold to resemble tRNA(Ala) and it encodes a 'tag peptide', a short internal open reading frame. During trans-translation Ala-aminoacylated tmRNA acts like a tRNA, entering the A-site of stalled ribosomes, displacing the stalled mRNA. The ribosome then switches to translate the ORF on the tmRNA; the nascent peptide is terminated with the 'tag peptide' encoded by the tmRNA and targeted for degradation. The ribosome is freed to recommence translation, which seems to be the essential function of trans-translation.</text>
</comment>
<comment type="subcellular location">
    <subcellularLocation>
        <location evidence="1">Cytoplasm</location>
    </subcellularLocation>
    <text evidence="1">The tmRNA-SmpB complex associates with stalled 70S ribosomes.</text>
</comment>
<comment type="similarity">
    <text evidence="1">Belongs to the SmpB family.</text>
</comment>
<keyword id="KW-0963">Cytoplasm</keyword>
<keyword id="KW-0694">RNA-binding</keyword>
<proteinExistence type="inferred from homology"/>
<protein>
    <recommendedName>
        <fullName evidence="1">SsrA-binding protein</fullName>
    </recommendedName>
    <alternativeName>
        <fullName evidence="1">Small protein B</fullName>
    </alternativeName>
</protein>
<reference key="1">
    <citation type="submission" date="2008-02" db="EMBL/GenBank/DDBJ databases">
        <title>Complete sequence of Haemophilus somnus 2336.</title>
        <authorList>
            <consortium name="US DOE Joint Genome Institute"/>
            <person name="Siddaramappa S."/>
            <person name="Duncan A.J."/>
            <person name="Challacombe J.F."/>
            <person name="Rainey D."/>
            <person name="Gillaspy A.F."/>
            <person name="Carson M."/>
            <person name="Gipson J."/>
            <person name="Gipson M."/>
            <person name="Bruce D."/>
            <person name="Detter J.C."/>
            <person name="Han C.S."/>
            <person name="Land M."/>
            <person name="Tapia R."/>
            <person name="Thompson L.S."/>
            <person name="Orvis J."/>
            <person name="Zaitshik J."/>
            <person name="Barnes G."/>
            <person name="Brettin T.S."/>
            <person name="Dyer D.W."/>
            <person name="Inzana T.J."/>
        </authorList>
    </citation>
    <scope>NUCLEOTIDE SEQUENCE [LARGE SCALE GENOMIC DNA]</scope>
    <source>
        <strain>2336</strain>
    </source>
</reference>
<name>SSRP_HISS2</name>